<dbReference type="EMBL" id="EU306659">
    <property type="protein sequence ID" value="ABY48148.1"/>
    <property type="molecule type" value="Genomic_DNA"/>
</dbReference>
<dbReference type="EMBL" id="CM001221">
    <property type="protein sequence ID" value="AES95928.2"/>
    <property type="molecule type" value="Genomic_DNA"/>
</dbReference>
<dbReference type="EMBL" id="PSQE01000005">
    <property type="protein sequence ID" value="RHN54888.1"/>
    <property type="molecule type" value="Genomic_DNA"/>
</dbReference>
<dbReference type="RefSeq" id="XP_003612970.2">
    <property type="nucleotide sequence ID" value="XM_003612922.2"/>
</dbReference>
<dbReference type="SMR" id="A9YWS7"/>
<dbReference type="STRING" id="3880.A9YWS7"/>
<dbReference type="GlyCosmos" id="A9YWS7">
    <property type="glycosylation" value="4 sites, No reported glycans"/>
</dbReference>
<dbReference type="PaxDb" id="3880-AES95928"/>
<dbReference type="EnsemblPlants" id="rna29986">
    <property type="protein sequence ID" value="RHN54888.1"/>
    <property type="gene ID" value="gene29986"/>
</dbReference>
<dbReference type="GeneID" id="11405785"/>
<dbReference type="Gramene" id="rna29986">
    <property type="protein sequence ID" value="RHN54888.1"/>
    <property type="gene ID" value="gene29986"/>
</dbReference>
<dbReference type="KEGG" id="mtr:11405785"/>
<dbReference type="eggNOG" id="ENOG502QTX3">
    <property type="taxonomic scope" value="Eukaryota"/>
</dbReference>
<dbReference type="HOGENOM" id="CLU_000288_62_2_1"/>
<dbReference type="OrthoDB" id="2014828at2759"/>
<dbReference type="Proteomes" id="UP000002051">
    <property type="component" value="Chromosome 5"/>
</dbReference>
<dbReference type="Proteomes" id="UP000265566">
    <property type="component" value="Chromosome 5"/>
</dbReference>
<dbReference type="GO" id="GO:0016020">
    <property type="term" value="C:membrane"/>
    <property type="evidence" value="ECO:0007669"/>
    <property type="project" value="UniProtKB-SubCell"/>
</dbReference>
<dbReference type="GO" id="GO:0030246">
    <property type="term" value="F:carbohydrate binding"/>
    <property type="evidence" value="ECO:0007669"/>
    <property type="project" value="UniProtKB-KW"/>
</dbReference>
<dbReference type="GO" id="GO:0009610">
    <property type="term" value="P:response to symbiotic fungus"/>
    <property type="evidence" value="ECO:0000270"/>
    <property type="project" value="UniProtKB"/>
</dbReference>
<dbReference type="CDD" id="cd06899">
    <property type="entry name" value="lectin_legume_LecRK_Arcelin_ConA"/>
    <property type="match status" value="1"/>
</dbReference>
<dbReference type="Gene3D" id="2.60.120.200">
    <property type="match status" value="1"/>
</dbReference>
<dbReference type="InterPro" id="IPR013320">
    <property type="entry name" value="ConA-like_dom_sf"/>
</dbReference>
<dbReference type="InterPro" id="IPR016363">
    <property type="entry name" value="L-lectin"/>
</dbReference>
<dbReference type="InterPro" id="IPR000985">
    <property type="entry name" value="Lectin_LegA_CS"/>
</dbReference>
<dbReference type="InterPro" id="IPR001220">
    <property type="entry name" value="Legume_lectin_dom"/>
</dbReference>
<dbReference type="InterPro" id="IPR050258">
    <property type="entry name" value="Leguminous_Lectin"/>
</dbReference>
<dbReference type="PANTHER" id="PTHR32401">
    <property type="entry name" value="CONCANAVALIN A-LIKE LECTIN FAMILY PROTEIN"/>
    <property type="match status" value="1"/>
</dbReference>
<dbReference type="PANTHER" id="PTHR32401:SF31">
    <property type="entry name" value="LECTIN 6"/>
    <property type="match status" value="1"/>
</dbReference>
<dbReference type="Pfam" id="PF00139">
    <property type="entry name" value="Lectin_legB"/>
    <property type="match status" value="1"/>
</dbReference>
<dbReference type="PIRSF" id="PIRSF002690">
    <property type="entry name" value="L-type_lectin_plant"/>
    <property type="match status" value="1"/>
</dbReference>
<dbReference type="SUPFAM" id="SSF49899">
    <property type="entry name" value="Concanavalin A-like lectins/glucanases"/>
    <property type="match status" value="1"/>
</dbReference>
<dbReference type="PROSITE" id="PS00308">
    <property type="entry name" value="LECTIN_LEGUME_ALPHA"/>
    <property type="match status" value="1"/>
</dbReference>
<gene>
    <name evidence="4" type="primary">LEC10</name>
    <name evidence="7" type="ordered locus">MTR_5g031160</name>
    <name evidence="8" type="ORF">MtrunA17_Chr5g0411771</name>
</gene>
<comment type="function">
    <text evidence="6">May be involved in arbuscular mycorrhizal (AM) symbiosis with AM fungi.</text>
</comment>
<comment type="subcellular location">
    <subcellularLocation>
        <location evidence="1">Membrane</location>
        <topology evidence="1">Single-pass membrane protein</topology>
    </subcellularLocation>
</comment>
<comment type="induction">
    <text evidence="3">Accumulates in roots during colonization by arbuscular mycorrhizal (AM) fungi (e.g. Glomus intraradices).</text>
</comment>
<comment type="similarity">
    <text evidence="5">Belongs to the leguminous lectin family.</text>
</comment>
<reference key="1">
    <citation type="journal article" date="2005" name="Mol. Genet. Genomics">
        <title>Significant microsynteny with new evolutionary highlights is detected between Arabidopsis and legume model plants despite the lack of macrosynteny.</title>
        <authorList>
            <person name="Kevei Z."/>
            <person name="Seres A."/>
            <person name="Kereszt A."/>
            <person name="Kalo P."/>
            <person name="Kiss P."/>
            <person name="Toth G."/>
            <person name="Endre G."/>
            <person name="Kiss G.B."/>
        </authorList>
    </citation>
    <scope>NUCLEOTIDE SEQUENCE [LARGE SCALE GENOMIC DNA]</scope>
    <source>
        <strain>cv. Jemalong A17</strain>
    </source>
</reference>
<reference key="2">
    <citation type="journal article" date="2011" name="Nature">
        <title>The Medicago genome provides insight into the evolution of rhizobial symbioses.</title>
        <authorList>
            <person name="Young N.D."/>
            <person name="Debelle F."/>
            <person name="Oldroyd G.E.D."/>
            <person name="Geurts R."/>
            <person name="Cannon S.B."/>
            <person name="Udvardi M.K."/>
            <person name="Benedito V.A."/>
            <person name="Mayer K.F.X."/>
            <person name="Gouzy J."/>
            <person name="Schoof H."/>
            <person name="Van de Peer Y."/>
            <person name="Proost S."/>
            <person name="Cook D.R."/>
            <person name="Meyers B.C."/>
            <person name="Spannagl M."/>
            <person name="Cheung F."/>
            <person name="De Mita S."/>
            <person name="Krishnakumar V."/>
            <person name="Gundlach H."/>
            <person name="Zhou S."/>
            <person name="Mudge J."/>
            <person name="Bharti A.K."/>
            <person name="Murray J.D."/>
            <person name="Naoumkina M.A."/>
            <person name="Rosen B."/>
            <person name="Silverstein K.A.T."/>
            <person name="Tang H."/>
            <person name="Rombauts S."/>
            <person name="Zhao P.X."/>
            <person name="Zhou P."/>
            <person name="Barbe V."/>
            <person name="Bardou P."/>
            <person name="Bechner M."/>
            <person name="Bellec A."/>
            <person name="Berger A."/>
            <person name="Berges H."/>
            <person name="Bidwell S."/>
            <person name="Bisseling T."/>
            <person name="Choisne N."/>
            <person name="Couloux A."/>
            <person name="Denny R."/>
            <person name="Deshpande S."/>
            <person name="Dai X."/>
            <person name="Doyle J.J."/>
            <person name="Dudez A.-M."/>
            <person name="Farmer A.D."/>
            <person name="Fouteau S."/>
            <person name="Franken C."/>
            <person name="Gibelin C."/>
            <person name="Gish J."/>
            <person name="Goldstein S."/>
            <person name="Gonzalez A.J."/>
            <person name="Green P.J."/>
            <person name="Hallab A."/>
            <person name="Hartog M."/>
            <person name="Hua A."/>
            <person name="Humphray S.J."/>
            <person name="Jeong D.-H."/>
            <person name="Jing Y."/>
            <person name="Jocker A."/>
            <person name="Kenton S.M."/>
            <person name="Kim D.-J."/>
            <person name="Klee K."/>
            <person name="Lai H."/>
            <person name="Lang C."/>
            <person name="Lin S."/>
            <person name="Macmil S.L."/>
            <person name="Magdelenat G."/>
            <person name="Matthews L."/>
            <person name="McCorrison J."/>
            <person name="Monaghan E.L."/>
            <person name="Mun J.-H."/>
            <person name="Najar F.Z."/>
            <person name="Nicholson C."/>
            <person name="Noirot C."/>
            <person name="O'Bleness M."/>
            <person name="Paule C.R."/>
            <person name="Poulain J."/>
            <person name="Prion F."/>
            <person name="Qin B."/>
            <person name="Qu C."/>
            <person name="Retzel E.F."/>
            <person name="Riddle C."/>
            <person name="Sallet E."/>
            <person name="Samain S."/>
            <person name="Samson N."/>
            <person name="Sanders I."/>
            <person name="Saurat O."/>
            <person name="Scarpelli C."/>
            <person name="Schiex T."/>
            <person name="Segurens B."/>
            <person name="Severin A.J."/>
            <person name="Sherrier D.J."/>
            <person name="Shi R."/>
            <person name="Sims S."/>
            <person name="Singer S.R."/>
            <person name="Sinharoy S."/>
            <person name="Sterck L."/>
            <person name="Viollet A."/>
            <person name="Wang B.-B."/>
            <person name="Wang K."/>
            <person name="Wang M."/>
            <person name="Wang X."/>
            <person name="Warfsmann J."/>
            <person name="Weissenbach J."/>
            <person name="White D.D."/>
            <person name="White J.D."/>
            <person name="Wiley G.B."/>
            <person name="Wincker P."/>
            <person name="Xing Y."/>
            <person name="Yang L."/>
            <person name="Yao Z."/>
            <person name="Ying F."/>
            <person name="Zhai J."/>
            <person name="Zhou L."/>
            <person name="Zuber A."/>
            <person name="Denarie J."/>
            <person name="Dixon R.A."/>
            <person name="May G.D."/>
            <person name="Schwartz D.C."/>
            <person name="Rogers J."/>
            <person name="Quetier F."/>
            <person name="Town C.D."/>
            <person name="Roe B.A."/>
        </authorList>
    </citation>
    <scope>NUCLEOTIDE SEQUENCE [LARGE SCALE GENOMIC DNA]</scope>
    <source>
        <strain>cv. Jemalong A17</strain>
    </source>
</reference>
<reference key="3">
    <citation type="journal article" date="2014" name="BMC Genomics">
        <title>An improved genome release (version Mt4.0) for the model legume Medicago truncatula.</title>
        <authorList>
            <person name="Tang H."/>
            <person name="Krishnakumar V."/>
            <person name="Bidwell S."/>
            <person name="Rosen B."/>
            <person name="Chan A."/>
            <person name="Zhou S."/>
            <person name="Gentzbittel L."/>
            <person name="Childs K.L."/>
            <person name="Yandell M."/>
            <person name="Gundlach H."/>
            <person name="Mayer K.F."/>
            <person name="Schwartz D.C."/>
            <person name="Town C.D."/>
        </authorList>
    </citation>
    <scope>GENOME REANNOTATION</scope>
    <source>
        <strain>cv. Jemalong A17</strain>
    </source>
</reference>
<reference key="4">
    <citation type="journal article" date="2018" name="Nat. Plants">
        <title>Whole-genome landscape of Medicago truncatula symbiotic genes.</title>
        <authorList>
            <person name="Pecrix Y."/>
            <person name="Staton S.E."/>
            <person name="Sallet E."/>
            <person name="Lelandais-Briere C."/>
            <person name="Moreau S."/>
            <person name="Carrere S."/>
            <person name="Blein T."/>
            <person name="Jardinaud M.F."/>
            <person name="Latrasse D."/>
            <person name="Zouine M."/>
            <person name="Zahm M."/>
            <person name="Kreplak J."/>
            <person name="Mayjonade B."/>
            <person name="Satge C."/>
            <person name="Perez M."/>
            <person name="Cauet S."/>
            <person name="Marande W."/>
            <person name="Chantry-Darmon C."/>
            <person name="Lopez-Roques C."/>
            <person name="Bouchez O."/>
            <person name="Berard A."/>
            <person name="Debelle F."/>
            <person name="Munos S."/>
            <person name="Bendahmane A."/>
            <person name="Berges H."/>
            <person name="Niebel A."/>
            <person name="Buitink J."/>
            <person name="Frugier F."/>
            <person name="Benhamed M."/>
            <person name="Crespi M."/>
            <person name="Gouzy J."/>
            <person name="Gamas P."/>
        </authorList>
    </citation>
    <scope>NUCLEOTIDE SEQUENCE [LARGE SCALE GENOMIC DNA]</scope>
    <source>
        <strain>cv. Jemalong A17</strain>
    </source>
</reference>
<reference key="5">
    <citation type="journal article" date="2005" name="Mol. Plant Microbe Interact.">
        <title>Combined transcriptome profiling reveals a novel family of arbuscular mycorrhizal-specific Medicago truncatula lectin genes.</title>
        <authorList>
            <person name="Frenzel A."/>
            <person name="Manthey K."/>
            <person name="Perlick A.M."/>
            <person name="Meyer F."/>
            <person name="Puehler A."/>
            <person name="Kuester H."/>
            <person name="Krajinski F."/>
        </authorList>
    </citation>
    <scope>INDUCTION BY ARBUSCULAR MYCORRHIZAL FUNGI</scope>
    <source>
        <strain>cv. Jemalong A17</strain>
    </source>
</reference>
<keyword id="KW-0325">Glycoprotein</keyword>
<keyword id="KW-0430">Lectin</keyword>
<keyword id="KW-0472">Membrane</keyword>
<keyword id="KW-1185">Reference proteome</keyword>
<keyword id="KW-0812">Transmembrane</keyword>
<keyword id="KW-1133">Transmembrane helix</keyword>
<feature type="chain" id="PRO_0000450045" description="Lectin 10">
    <location>
        <begin position="1"/>
        <end position="287"/>
    </location>
</feature>
<feature type="topological domain" description="Cytoplasmic" evidence="5">
    <location>
        <begin position="1"/>
        <end position="11"/>
    </location>
</feature>
<feature type="transmembrane region" description="Helical" evidence="1">
    <location>
        <begin position="12"/>
        <end position="31"/>
    </location>
</feature>
<feature type="topological domain" description="Extracellular" evidence="5">
    <location>
        <begin position="32"/>
        <end position="287"/>
    </location>
</feature>
<feature type="glycosylation site" description="N-linked (GlcNAc...) asparagine" evidence="2">
    <location>
        <position position="124"/>
    </location>
</feature>
<feature type="glycosylation site" description="N-linked (GlcNAc...) asparagine" evidence="2">
    <location>
        <position position="147"/>
    </location>
</feature>
<feature type="glycosylation site" description="N-linked (GlcNAc...) asparagine" evidence="2">
    <location>
        <position position="243"/>
    </location>
</feature>
<feature type="glycosylation site" description="N-linked (GlcNAc...) asparagine" evidence="2">
    <location>
        <position position="280"/>
    </location>
</feature>
<proteinExistence type="evidence at transcript level"/>
<evidence type="ECO:0000255" key="1"/>
<evidence type="ECO:0000255" key="2">
    <source>
        <dbReference type="PROSITE-ProRule" id="PRU00498"/>
    </source>
</evidence>
<evidence type="ECO:0000269" key="3">
    <source>
    </source>
</evidence>
<evidence type="ECO:0000303" key="4">
    <source>
    </source>
</evidence>
<evidence type="ECO:0000305" key="5"/>
<evidence type="ECO:0000305" key="6">
    <source>
    </source>
</evidence>
<evidence type="ECO:0000312" key="7">
    <source>
        <dbReference type="EMBL" id="AES95928.2"/>
    </source>
</evidence>
<evidence type="ECO:0000312" key="8">
    <source>
        <dbReference type="EMBL" id="RHN54888.1"/>
    </source>
</evidence>
<name>LEC10_MEDTR</name>
<accession>A9YWS7</accession>
<accession>A0A0C3XFZ3</accession>
<accession>G7KGH3</accession>
<sequence>MALSNLKSNRTLSSSLITIFIISLFLQYHNIKSQSSWQSRQVPRSETVAFSITEFEKENPDIFLRGDTSISDGILRLTKTDQSGKPLPNTVGRATYLTPIHIWDKTSGELADFSTSFSFIVNTNDSDLHGDGFAFYLGPLHFDVPKNSSGGYLGLFDPENAFPPSKTPILAIEFDGFTNEWDPPSSFQSPHIGIDVGSIVSLEYAQWPINFVPRNALGEANINYNSESKRLSVFVAYPGTQWNSTRVSVVVDLRSVLPEWVRIGFSATTGELVETHDIINWSFESAL</sequence>
<organism>
    <name type="scientific">Medicago truncatula</name>
    <name type="common">Barrel medic</name>
    <name type="synonym">Medicago tribuloides</name>
    <dbReference type="NCBI Taxonomy" id="3880"/>
    <lineage>
        <taxon>Eukaryota</taxon>
        <taxon>Viridiplantae</taxon>
        <taxon>Streptophyta</taxon>
        <taxon>Embryophyta</taxon>
        <taxon>Tracheophyta</taxon>
        <taxon>Spermatophyta</taxon>
        <taxon>Magnoliopsida</taxon>
        <taxon>eudicotyledons</taxon>
        <taxon>Gunneridae</taxon>
        <taxon>Pentapetalae</taxon>
        <taxon>rosids</taxon>
        <taxon>fabids</taxon>
        <taxon>Fabales</taxon>
        <taxon>Fabaceae</taxon>
        <taxon>Papilionoideae</taxon>
        <taxon>50 kb inversion clade</taxon>
        <taxon>NPAAA clade</taxon>
        <taxon>Hologalegina</taxon>
        <taxon>IRL clade</taxon>
        <taxon>Trifolieae</taxon>
        <taxon>Medicago</taxon>
    </lineage>
</organism>
<protein>
    <recommendedName>
        <fullName evidence="4">Lectin 10</fullName>
        <shortName evidence="4">MtLec10</shortName>
    </recommendedName>
    <alternativeName>
        <fullName evidence="5">Agglutinin LEC10</fullName>
    </alternativeName>
</protein>